<evidence type="ECO:0000250" key="1"/>
<evidence type="ECO:0000250" key="2">
    <source>
        <dbReference type="UniProtKB" id="Q9UGM6"/>
    </source>
</evidence>
<evidence type="ECO:0000305" key="3"/>
<organism>
    <name type="scientific">Mus musculus</name>
    <name type="common">Mouse</name>
    <dbReference type="NCBI Taxonomy" id="10090"/>
    <lineage>
        <taxon>Eukaryota</taxon>
        <taxon>Metazoa</taxon>
        <taxon>Chordata</taxon>
        <taxon>Craniata</taxon>
        <taxon>Vertebrata</taxon>
        <taxon>Euteleostomi</taxon>
        <taxon>Mammalia</taxon>
        <taxon>Eutheria</taxon>
        <taxon>Euarchontoglires</taxon>
        <taxon>Glires</taxon>
        <taxon>Rodentia</taxon>
        <taxon>Myomorpha</taxon>
        <taxon>Muroidea</taxon>
        <taxon>Muridae</taxon>
        <taxon>Murinae</taxon>
        <taxon>Mus</taxon>
        <taxon>Mus</taxon>
    </lineage>
</organism>
<keyword id="KW-0030">Aminoacyl-tRNA synthetase</keyword>
<keyword id="KW-0067">ATP-binding</keyword>
<keyword id="KW-0436">Ligase</keyword>
<keyword id="KW-0496">Mitochondrion</keyword>
<keyword id="KW-0547">Nucleotide-binding</keyword>
<keyword id="KW-0648">Protein biosynthesis</keyword>
<keyword id="KW-1185">Reference proteome</keyword>
<keyword id="KW-0809">Transit peptide</keyword>
<dbReference type="EC" id="6.1.1.2" evidence="2"/>
<dbReference type="EMBL" id="AK017602">
    <property type="protein sequence ID" value="BAB30833.1"/>
    <property type="molecule type" value="mRNA"/>
</dbReference>
<dbReference type="EMBL" id="AK042715">
    <property type="protein sequence ID" value="BAC31342.1"/>
    <property type="molecule type" value="mRNA"/>
</dbReference>
<dbReference type="EMBL" id="AK042964">
    <property type="protein sequence ID" value="BAC31422.1"/>
    <property type="molecule type" value="mRNA"/>
</dbReference>
<dbReference type="EMBL" id="BC089583">
    <property type="protein sequence ID" value="AAH89583.1"/>
    <property type="molecule type" value="mRNA"/>
</dbReference>
<dbReference type="CCDS" id="CCDS17672.1"/>
<dbReference type="RefSeq" id="NP_081738.2">
    <property type="nucleotide sequence ID" value="NM_027462.4"/>
</dbReference>
<dbReference type="SMR" id="Q9CYK1"/>
<dbReference type="BioGRID" id="214134">
    <property type="interactions" value="1"/>
</dbReference>
<dbReference type="FunCoup" id="Q9CYK1">
    <property type="interactions" value="1961"/>
</dbReference>
<dbReference type="STRING" id="10090.ENSMUSP00000004343"/>
<dbReference type="iPTMnet" id="Q9CYK1"/>
<dbReference type="PhosphoSitePlus" id="Q9CYK1"/>
<dbReference type="PaxDb" id="10090-ENSMUSP00000004343"/>
<dbReference type="PeptideAtlas" id="Q9CYK1"/>
<dbReference type="ProteomicsDB" id="253451"/>
<dbReference type="Pumba" id="Q9CYK1"/>
<dbReference type="Antibodypedia" id="33903">
    <property type="antibodies" value="78 antibodies from 27 providers"/>
</dbReference>
<dbReference type="DNASU" id="70560"/>
<dbReference type="Ensembl" id="ENSMUST00000004343.7">
    <property type="protein sequence ID" value="ENSMUSP00000004343.3"/>
    <property type="gene ID" value="ENSMUSG00000004233.15"/>
</dbReference>
<dbReference type="GeneID" id="70560"/>
<dbReference type="KEGG" id="mmu:70560"/>
<dbReference type="UCSC" id="uc008qqk.1">
    <property type="organism name" value="mouse"/>
</dbReference>
<dbReference type="AGR" id="MGI:1917810"/>
<dbReference type="CTD" id="10352"/>
<dbReference type="MGI" id="MGI:1917810">
    <property type="gene designation" value="Wars2"/>
</dbReference>
<dbReference type="VEuPathDB" id="HostDB:ENSMUSG00000004233"/>
<dbReference type="eggNOG" id="KOG2713">
    <property type="taxonomic scope" value="Eukaryota"/>
</dbReference>
<dbReference type="GeneTree" id="ENSGT00940000153724"/>
<dbReference type="HOGENOM" id="CLU_029244_1_5_1"/>
<dbReference type="InParanoid" id="Q9CYK1"/>
<dbReference type="OMA" id="GWGQFKP"/>
<dbReference type="OrthoDB" id="15808at2759"/>
<dbReference type="PhylomeDB" id="Q9CYK1"/>
<dbReference type="TreeFam" id="TF314321"/>
<dbReference type="BioGRID-ORCS" id="70560">
    <property type="hits" value="22 hits in 76 CRISPR screens"/>
</dbReference>
<dbReference type="ChiTaRS" id="Wars2">
    <property type="organism name" value="mouse"/>
</dbReference>
<dbReference type="PRO" id="PR:Q9CYK1"/>
<dbReference type="Proteomes" id="UP000000589">
    <property type="component" value="Chromosome 3"/>
</dbReference>
<dbReference type="RNAct" id="Q9CYK1">
    <property type="molecule type" value="protein"/>
</dbReference>
<dbReference type="Bgee" id="ENSMUSG00000004233">
    <property type="expression patterns" value="Expressed in metanephric loop of Henle and 196 other cell types or tissues"/>
</dbReference>
<dbReference type="ExpressionAtlas" id="Q9CYK1">
    <property type="expression patterns" value="baseline and differential"/>
</dbReference>
<dbReference type="GO" id="GO:0005759">
    <property type="term" value="C:mitochondrial matrix"/>
    <property type="evidence" value="ECO:0000250"/>
    <property type="project" value="UniProtKB"/>
</dbReference>
<dbReference type="GO" id="GO:0005739">
    <property type="term" value="C:mitochondrion"/>
    <property type="evidence" value="ECO:0007005"/>
    <property type="project" value="MGI"/>
</dbReference>
<dbReference type="GO" id="GO:0005654">
    <property type="term" value="C:nucleoplasm"/>
    <property type="evidence" value="ECO:0007669"/>
    <property type="project" value="Ensembl"/>
</dbReference>
<dbReference type="GO" id="GO:0005886">
    <property type="term" value="C:plasma membrane"/>
    <property type="evidence" value="ECO:0007669"/>
    <property type="project" value="Ensembl"/>
</dbReference>
<dbReference type="GO" id="GO:0005524">
    <property type="term" value="F:ATP binding"/>
    <property type="evidence" value="ECO:0007669"/>
    <property type="project" value="UniProtKB-KW"/>
</dbReference>
<dbReference type="GO" id="GO:0004830">
    <property type="term" value="F:tryptophan-tRNA ligase activity"/>
    <property type="evidence" value="ECO:0000250"/>
    <property type="project" value="UniProtKB"/>
</dbReference>
<dbReference type="GO" id="GO:0045766">
    <property type="term" value="P:positive regulation of angiogenesis"/>
    <property type="evidence" value="ECO:0007669"/>
    <property type="project" value="Ensembl"/>
</dbReference>
<dbReference type="GO" id="GO:0006436">
    <property type="term" value="P:tryptophanyl-tRNA aminoacylation"/>
    <property type="evidence" value="ECO:0007669"/>
    <property type="project" value="InterPro"/>
</dbReference>
<dbReference type="GO" id="GO:0001570">
    <property type="term" value="P:vasculogenesis"/>
    <property type="evidence" value="ECO:0000314"/>
    <property type="project" value="MGI"/>
</dbReference>
<dbReference type="CDD" id="cd00806">
    <property type="entry name" value="TrpRS_core"/>
    <property type="match status" value="1"/>
</dbReference>
<dbReference type="FunFam" id="3.40.50.620:FF:000082">
    <property type="entry name" value="MSW1p Mitochondrial tryptophanyl-tRNA synthetase"/>
    <property type="match status" value="1"/>
</dbReference>
<dbReference type="FunFam" id="1.10.240.10:FF:000002">
    <property type="entry name" value="Tryptophan--tRNA ligase"/>
    <property type="match status" value="1"/>
</dbReference>
<dbReference type="Gene3D" id="3.40.50.620">
    <property type="entry name" value="HUPs"/>
    <property type="match status" value="1"/>
</dbReference>
<dbReference type="Gene3D" id="1.10.240.10">
    <property type="entry name" value="Tyrosyl-Transfer RNA Synthetase"/>
    <property type="match status" value="1"/>
</dbReference>
<dbReference type="HAMAP" id="MF_00140_B">
    <property type="entry name" value="Trp_tRNA_synth_B"/>
    <property type="match status" value="1"/>
</dbReference>
<dbReference type="InterPro" id="IPR001412">
    <property type="entry name" value="aa-tRNA-synth_I_CS"/>
</dbReference>
<dbReference type="InterPro" id="IPR002305">
    <property type="entry name" value="aa-tRNA-synth_Ic"/>
</dbReference>
<dbReference type="InterPro" id="IPR014729">
    <property type="entry name" value="Rossmann-like_a/b/a_fold"/>
</dbReference>
<dbReference type="InterPro" id="IPR002306">
    <property type="entry name" value="Trp-tRNA-ligase"/>
</dbReference>
<dbReference type="InterPro" id="IPR024109">
    <property type="entry name" value="Trp-tRNA-ligase_bac-type"/>
</dbReference>
<dbReference type="InterPro" id="IPR050203">
    <property type="entry name" value="Trp-tRNA_synthetase"/>
</dbReference>
<dbReference type="NCBIfam" id="TIGR00233">
    <property type="entry name" value="trpS"/>
    <property type="match status" value="1"/>
</dbReference>
<dbReference type="PANTHER" id="PTHR43766">
    <property type="entry name" value="TRYPTOPHAN--TRNA LIGASE, MITOCHONDRIAL"/>
    <property type="match status" value="1"/>
</dbReference>
<dbReference type="PANTHER" id="PTHR43766:SF1">
    <property type="entry name" value="TRYPTOPHAN--TRNA LIGASE, MITOCHONDRIAL"/>
    <property type="match status" value="1"/>
</dbReference>
<dbReference type="Pfam" id="PF00579">
    <property type="entry name" value="tRNA-synt_1b"/>
    <property type="match status" value="1"/>
</dbReference>
<dbReference type="PRINTS" id="PR01039">
    <property type="entry name" value="TRNASYNTHTRP"/>
</dbReference>
<dbReference type="SUPFAM" id="SSF52374">
    <property type="entry name" value="Nucleotidylyl transferase"/>
    <property type="match status" value="1"/>
</dbReference>
<dbReference type="PROSITE" id="PS00178">
    <property type="entry name" value="AA_TRNA_LIGASE_I"/>
    <property type="match status" value="1"/>
</dbReference>
<proteinExistence type="evidence at protein level"/>
<accession>Q9CYK1</accession>
<accession>Q8BFV8</accession>
<name>SYWM_MOUSE</name>
<protein>
    <recommendedName>
        <fullName>Tryptophan--tRNA ligase, mitochondrial</fullName>
        <ecNumber evidence="2">6.1.1.2</ecNumber>
    </recommendedName>
    <alternativeName>
        <fullName>(Mt)TrpRS</fullName>
    </alternativeName>
    <alternativeName>
        <fullName>Tryptophanyl-tRNA synthetase</fullName>
        <shortName>TrpRS</shortName>
    </alternativeName>
</protein>
<comment type="function">
    <text evidence="2">Catalyzes the attachment of tryptophan to tRNA(Trp) in a two-step reaction: tryptophan is first activated by ATP to form Trp-AMP and then transferred to the acceptor end of tRNA(Trp).</text>
</comment>
<comment type="catalytic activity">
    <reaction evidence="2">
        <text>tRNA(Trp) + L-tryptophan + ATP = L-tryptophyl-tRNA(Trp) + AMP + diphosphate + H(+)</text>
        <dbReference type="Rhea" id="RHEA:24080"/>
        <dbReference type="Rhea" id="RHEA-COMP:9671"/>
        <dbReference type="Rhea" id="RHEA-COMP:9705"/>
        <dbReference type="ChEBI" id="CHEBI:15378"/>
        <dbReference type="ChEBI" id="CHEBI:30616"/>
        <dbReference type="ChEBI" id="CHEBI:33019"/>
        <dbReference type="ChEBI" id="CHEBI:57912"/>
        <dbReference type="ChEBI" id="CHEBI:78442"/>
        <dbReference type="ChEBI" id="CHEBI:78535"/>
        <dbReference type="ChEBI" id="CHEBI:456215"/>
        <dbReference type="EC" id="6.1.1.2"/>
    </reaction>
</comment>
<comment type="subcellular location">
    <subcellularLocation>
        <location evidence="2">Mitochondrion matrix</location>
    </subcellularLocation>
    <subcellularLocation>
        <location evidence="2">Mitochondrion</location>
    </subcellularLocation>
</comment>
<comment type="similarity">
    <text evidence="3">Belongs to the class-I aminoacyl-tRNA synthetase family.</text>
</comment>
<feature type="transit peptide" description="Mitochondrion" evidence="1">
    <location>
        <begin position="1"/>
        <end position="18"/>
    </location>
</feature>
<feature type="chain" id="PRO_0000035829" description="Tryptophan--tRNA ligase, mitochondrial">
    <location>
        <begin position="19"/>
        <end position="360"/>
    </location>
</feature>
<feature type="binding site" evidence="2">
    <location>
        <position position="42"/>
    </location>
    <ligand>
        <name>ATP</name>
        <dbReference type="ChEBI" id="CHEBI:30616"/>
    </ligand>
</feature>
<feature type="binding site" evidence="2">
    <location>
        <begin position="48"/>
        <end position="51"/>
    </location>
    <ligand>
        <name>ATP</name>
        <dbReference type="ChEBI" id="CHEBI:30616"/>
    </ligand>
</feature>
<feature type="binding site" evidence="2">
    <location>
        <position position="167"/>
    </location>
    <ligand>
        <name>L-tryptophan</name>
        <dbReference type="ChEBI" id="CHEBI:57912"/>
    </ligand>
</feature>
<feature type="binding site" evidence="2">
    <location>
        <begin position="179"/>
        <end position="181"/>
    </location>
    <ligand>
        <name>ATP</name>
        <dbReference type="ChEBI" id="CHEBI:30616"/>
    </ligand>
</feature>
<feature type="binding site" evidence="2">
    <location>
        <position position="217"/>
    </location>
    <ligand>
        <name>ATP</name>
        <dbReference type="ChEBI" id="CHEBI:30616"/>
    </ligand>
</feature>
<feature type="binding site" evidence="2">
    <location>
        <begin position="226"/>
        <end position="230"/>
    </location>
    <ligand>
        <name>ATP</name>
        <dbReference type="ChEBI" id="CHEBI:30616"/>
    </ligand>
</feature>
<feature type="sequence conflict" description="In Ref. 1; BAB30833." evidence="3" ref="1">
    <original>KQ</original>
    <variation>NR</variation>
    <location>
        <begin position="148"/>
        <end position="149"/>
    </location>
</feature>
<sequence length="360" mass="40153">MALFSVRKARECWRFIRALHKGPAATLAPQKESGERVFSGIQPTGILHLGNYLGAIESWVNLQEEYDTVIYSIVDLHSITVPQDPTVLQQSILDMTAVLLACGINPEKSILFQQSKVSEHTQLSWILTCMVRLPRLQHLHQWKAKAAKQKHDGTVGLLTYPVLQAADILCYKSTHVPVGEDQVQHMELVQDLARSFNQKYGEFFPLPKSILTSMKKVKSLRDPSSKMSKSDPDKLATVRITDSPEEIVQKFRKAVTDFTSEVTYEPDSRAGVSNMVAIHAAVSGLSVEEVVRSSAGLDTARYKLLVADAVIEKFAPIRKEIEKLKMDKDHLRKVLLVGSAKAKELASPVFEEVKKLVGIL</sequence>
<reference key="1">
    <citation type="journal article" date="2005" name="Science">
        <title>The transcriptional landscape of the mammalian genome.</title>
        <authorList>
            <person name="Carninci P."/>
            <person name="Kasukawa T."/>
            <person name="Katayama S."/>
            <person name="Gough J."/>
            <person name="Frith M.C."/>
            <person name="Maeda N."/>
            <person name="Oyama R."/>
            <person name="Ravasi T."/>
            <person name="Lenhard B."/>
            <person name="Wells C."/>
            <person name="Kodzius R."/>
            <person name="Shimokawa K."/>
            <person name="Bajic V.B."/>
            <person name="Brenner S.E."/>
            <person name="Batalov S."/>
            <person name="Forrest A.R."/>
            <person name="Zavolan M."/>
            <person name="Davis M.J."/>
            <person name="Wilming L.G."/>
            <person name="Aidinis V."/>
            <person name="Allen J.E."/>
            <person name="Ambesi-Impiombato A."/>
            <person name="Apweiler R."/>
            <person name="Aturaliya R.N."/>
            <person name="Bailey T.L."/>
            <person name="Bansal M."/>
            <person name="Baxter L."/>
            <person name="Beisel K.W."/>
            <person name="Bersano T."/>
            <person name="Bono H."/>
            <person name="Chalk A.M."/>
            <person name="Chiu K.P."/>
            <person name="Choudhary V."/>
            <person name="Christoffels A."/>
            <person name="Clutterbuck D.R."/>
            <person name="Crowe M.L."/>
            <person name="Dalla E."/>
            <person name="Dalrymple B.P."/>
            <person name="de Bono B."/>
            <person name="Della Gatta G."/>
            <person name="di Bernardo D."/>
            <person name="Down T."/>
            <person name="Engstrom P."/>
            <person name="Fagiolini M."/>
            <person name="Faulkner G."/>
            <person name="Fletcher C.F."/>
            <person name="Fukushima T."/>
            <person name="Furuno M."/>
            <person name="Futaki S."/>
            <person name="Gariboldi M."/>
            <person name="Georgii-Hemming P."/>
            <person name="Gingeras T.R."/>
            <person name="Gojobori T."/>
            <person name="Green R.E."/>
            <person name="Gustincich S."/>
            <person name="Harbers M."/>
            <person name="Hayashi Y."/>
            <person name="Hensch T.K."/>
            <person name="Hirokawa N."/>
            <person name="Hill D."/>
            <person name="Huminiecki L."/>
            <person name="Iacono M."/>
            <person name="Ikeo K."/>
            <person name="Iwama A."/>
            <person name="Ishikawa T."/>
            <person name="Jakt M."/>
            <person name="Kanapin A."/>
            <person name="Katoh M."/>
            <person name="Kawasawa Y."/>
            <person name="Kelso J."/>
            <person name="Kitamura H."/>
            <person name="Kitano H."/>
            <person name="Kollias G."/>
            <person name="Krishnan S.P."/>
            <person name="Kruger A."/>
            <person name="Kummerfeld S.K."/>
            <person name="Kurochkin I.V."/>
            <person name="Lareau L.F."/>
            <person name="Lazarevic D."/>
            <person name="Lipovich L."/>
            <person name="Liu J."/>
            <person name="Liuni S."/>
            <person name="McWilliam S."/>
            <person name="Madan Babu M."/>
            <person name="Madera M."/>
            <person name="Marchionni L."/>
            <person name="Matsuda H."/>
            <person name="Matsuzawa S."/>
            <person name="Miki H."/>
            <person name="Mignone F."/>
            <person name="Miyake S."/>
            <person name="Morris K."/>
            <person name="Mottagui-Tabar S."/>
            <person name="Mulder N."/>
            <person name="Nakano N."/>
            <person name="Nakauchi H."/>
            <person name="Ng P."/>
            <person name="Nilsson R."/>
            <person name="Nishiguchi S."/>
            <person name="Nishikawa S."/>
            <person name="Nori F."/>
            <person name="Ohara O."/>
            <person name="Okazaki Y."/>
            <person name="Orlando V."/>
            <person name="Pang K.C."/>
            <person name="Pavan W.J."/>
            <person name="Pavesi G."/>
            <person name="Pesole G."/>
            <person name="Petrovsky N."/>
            <person name="Piazza S."/>
            <person name="Reed J."/>
            <person name="Reid J.F."/>
            <person name="Ring B.Z."/>
            <person name="Ringwald M."/>
            <person name="Rost B."/>
            <person name="Ruan Y."/>
            <person name="Salzberg S.L."/>
            <person name="Sandelin A."/>
            <person name="Schneider C."/>
            <person name="Schoenbach C."/>
            <person name="Sekiguchi K."/>
            <person name="Semple C.A."/>
            <person name="Seno S."/>
            <person name="Sessa L."/>
            <person name="Sheng Y."/>
            <person name="Shibata Y."/>
            <person name="Shimada H."/>
            <person name="Shimada K."/>
            <person name="Silva D."/>
            <person name="Sinclair B."/>
            <person name="Sperling S."/>
            <person name="Stupka E."/>
            <person name="Sugiura K."/>
            <person name="Sultana R."/>
            <person name="Takenaka Y."/>
            <person name="Taki K."/>
            <person name="Tammoja K."/>
            <person name="Tan S.L."/>
            <person name="Tang S."/>
            <person name="Taylor M.S."/>
            <person name="Tegner J."/>
            <person name="Teichmann S.A."/>
            <person name="Ueda H.R."/>
            <person name="van Nimwegen E."/>
            <person name="Verardo R."/>
            <person name="Wei C.L."/>
            <person name="Yagi K."/>
            <person name="Yamanishi H."/>
            <person name="Zabarovsky E."/>
            <person name="Zhu S."/>
            <person name="Zimmer A."/>
            <person name="Hide W."/>
            <person name="Bult C."/>
            <person name="Grimmond S.M."/>
            <person name="Teasdale R.D."/>
            <person name="Liu E.T."/>
            <person name="Brusic V."/>
            <person name="Quackenbush J."/>
            <person name="Wahlestedt C."/>
            <person name="Mattick J.S."/>
            <person name="Hume D.A."/>
            <person name="Kai C."/>
            <person name="Sasaki D."/>
            <person name="Tomaru Y."/>
            <person name="Fukuda S."/>
            <person name="Kanamori-Katayama M."/>
            <person name="Suzuki M."/>
            <person name="Aoki J."/>
            <person name="Arakawa T."/>
            <person name="Iida J."/>
            <person name="Imamura K."/>
            <person name="Itoh M."/>
            <person name="Kato T."/>
            <person name="Kawaji H."/>
            <person name="Kawagashira N."/>
            <person name="Kawashima T."/>
            <person name="Kojima M."/>
            <person name="Kondo S."/>
            <person name="Konno H."/>
            <person name="Nakano K."/>
            <person name="Ninomiya N."/>
            <person name="Nishio T."/>
            <person name="Okada M."/>
            <person name="Plessy C."/>
            <person name="Shibata K."/>
            <person name="Shiraki T."/>
            <person name="Suzuki S."/>
            <person name="Tagami M."/>
            <person name="Waki K."/>
            <person name="Watahiki A."/>
            <person name="Okamura-Oho Y."/>
            <person name="Suzuki H."/>
            <person name="Kawai J."/>
            <person name="Hayashizaki Y."/>
        </authorList>
    </citation>
    <scope>NUCLEOTIDE SEQUENCE [LARGE SCALE MRNA]</scope>
    <source>
        <strain>C57BL/6J</strain>
        <tissue>Cerebellum</tissue>
        <tissue>Embryo</tissue>
    </source>
</reference>
<reference key="2">
    <citation type="journal article" date="2004" name="Genome Res.">
        <title>The status, quality, and expansion of the NIH full-length cDNA project: the Mammalian Gene Collection (MGC).</title>
        <authorList>
            <consortium name="The MGC Project Team"/>
        </authorList>
    </citation>
    <scope>NUCLEOTIDE SEQUENCE [LARGE SCALE MRNA]</scope>
    <source>
        <tissue>Kidney</tissue>
    </source>
</reference>
<reference key="3">
    <citation type="journal article" date="2010" name="Cell">
        <title>A tissue-specific atlas of mouse protein phosphorylation and expression.</title>
        <authorList>
            <person name="Huttlin E.L."/>
            <person name="Jedrychowski M.P."/>
            <person name="Elias J.E."/>
            <person name="Goswami T."/>
            <person name="Rad R."/>
            <person name="Beausoleil S.A."/>
            <person name="Villen J."/>
            <person name="Haas W."/>
            <person name="Sowa M.E."/>
            <person name="Gygi S.P."/>
        </authorList>
    </citation>
    <scope>IDENTIFICATION BY MASS SPECTROMETRY [LARGE SCALE ANALYSIS]</scope>
    <source>
        <tissue>Brain</tissue>
        <tissue>Brown adipose tissue</tissue>
        <tissue>Heart</tissue>
        <tissue>Kidney</tissue>
        <tissue>Lung</tissue>
        <tissue>Spleen</tissue>
    </source>
</reference>
<gene>
    <name type="primary">Wars2</name>
</gene>